<protein>
    <recommendedName>
        <fullName evidence="1">Succinyl-diaminopimelate desuccinylase</fullName>
        <shortName evidence="1">SDAP desuccinylase</shortName>
        <ecNumber evidence="1">3.5.1.18</ecNumber>
    </recommendedName>
    <alternativeName>
        <fullName evidence="1">N-succinyl-LL-2,6-diaminoheptanedioate amidohydrolase</fullName>
    </alternativeName>
</protein>
<dbReference type="EC" id="3.5.1.18" evidence="1"/>
<dbReference type="EMBL" id="AM933173">
    <property type="protein sequence ID" value="CAR38339.1"/>
    <property type="molecule type" value="Genomic_DNA"/>
</dbReference>
<dbReference type="RefSeq" id="WP_001277825.1">
    <property type="nucleotide sequence ID" value="NC_011274.1"/>
</dbReference>
<dbReference type="SMR" id="B5RCV3"/>
<dbReference type="MEROPS" id="M20.010"/>
<dbReference type="KEGG" id="seg:SG2513"/>
<dbReference type="HOGENOM" id="CLU_021802_4_0_6"/>
<dbReference type="UniPathway" id="UPA00034">
    <property type="reaction ID" value="UER00021"/>
</dbReference>
<dbReference type="Proteomes" id="UP000008321">
    <property type="component" value="Chromosome"/>
</dbReference>
<dbReference type="GO" id="GO:0008777">
    <property type="term" value="F:acetylornithine deacetylase activity"/>
    <property type="evidence" value="ECO:0007669"/>
    <property type="project" value="TreeGrafter"/>
</dbReference>
<dbReference type="GO" id="GO:0050897">
    <property type="term" value="F:cobalt ion binding"/>
    <property type="evidence" value="ECO:0007669"/>
    <property type="project" value="UniProtKB-UniRule"/>
</dbReference>
<dbReference type="GO" id="GO:0009014">
    <property type="term" value="F:succinyl-diaminopimelate desuccinylase activity"/>
    <property type="evidence" value="ECO:0007669"/>
    <property type="project" value="UniProtKB-UniRule"/>
</dbReference>
<dbReference type="GO" id="GO:0008270">
    <property type="term" value="F:zinc ion binding"/>
    <property type="evidence" value="ECO:0007669"/>
    <property type="project" value="UniProtKB-UniRule"/>
</dbReference>
<dbReference type="GO" id="GO:0019877">
    <property type="term" value="P:diaminopimelate biosynthetic process"/>
    <property type="evidence" value="ECO:0007669"/>
    <property type="project" value="UniProtKB-UniRule"/>
</dbReference>
<dbReference type="GO" id="GO:0006526">
    <property type="term" value="P:L-arginine biosynthetic process"/>
    <property type="evidence" value="ECO:0007669"/>
    <property type="project" value="TreeGrafter"/>
</dbReference>
<dbReference type="GO" id="GO:0009089">
    <property type="term" value="P:lysine biosynthetic process via diaminopimelate"/>
    <property type="evidence" value="ECO:0007669"/>
    <property type="project" value="UniProtKB-UniRule"/>
</dbReference>
<dbReference type="CDD" id="cd03891">
    <property type="entry name" value="M20_DapE_proteobac"/>
    <property type="match status" value="1"/>
</dbReference>
<dbReference type="FunFam" id="3.30.70.360:FF:000011">
    <property type="entry name" value="Succinyl-diaminopimelate desuccinylase"/>
    <property type="match status" value="1"/>
</dbReference>
<dbReference type="FunFam" id="3.40.630.10:FF:000005">
    <property type="entry name" value="Succinyl-diaminopimelate desuccinylase"/>
    <property type="match status" value="1"/>
</dbReference>
<dbReference type="FunFam" id="3.40.630.10:FF:000010">
    <property type="entry name" value="Succinyl-diaminopimelate desuccinylase"/>
    <property type="match status" value="1"/>
</dbReference>
<dbReference type="Gene3D" id="3.40.630.10">
    <property type="entry name" value="Zn peptidases"/>
    <property type="match status" value="2"/>
</dbReference>
<dbReference type="HAMAP" id="MF_01690">
    <property type="entry name" value="DapE"/>
    <property type="match status" value="1"/>
</dbReference>
<dbReference type="InterPro" id="IPR001261">
    <property type="entry name" value="ArgE/DapE_CS"/>
</dbReference>
<dbReference type="InterPro" id="IPR036264">
    <property type="entry name" value="Bact_exopeptidase_dim_dom"/>
</dbReference>
<dbReference type="InterPro" id="IPR005941">
    <property type="entry name" value="DapE_proteobac"/>
</dbReference>
<dbReference type="InterPro" id="IPR002933">
    <property type="entry name" value="Peptidase_M20"/>
</dbReference>
<dbReference type="InterPro" id="IPR011650">
    <property type="entry name" value="Peptidase_M20_dimer"/>
</dbReference>
<dbReference type="InterPro" id="IPR050072">
    <property type="entry name" value="Peptidase_M20A"/>
</dbReference>
<dbReference type="NCBIfam" id="TIGR01246">
    <property type="entry name" value="dapE_proteo"/>
    <property type="match status" value="1"/>
</dbReference>
<dbReference type="NCBIfam" id="NF009557">
    <property type="entry name" value="PRK13009.1"/>
    <property type="match status" value="1"/>
</dbReference>
<dbReference type="PANTHER" id="PTHR43808">
    <property type="entry name" value="ACETYLORNITHINE DEACETYLASE"/>
    <property type="match status" value="1"/>
</dbReference>
<dbReference type="PANTHER" id="PTHR43808:SF31">
    <property type="entry name" value="N-ACETYL-L-CITRULLINE DEACETYLASE"/>
    <property type="match status" value="1"/>
</dbReference>
<dbReference type="Pfam" id="PF07687">
    <property type="entry name" value="M20_dimer"/>
    <property type="match status" value="1"/>
</dbReference>
<dbReference type="Pfam" id="PF01546">
    <property type="entry name" value="Peptidase_M20"/>
    <property type="match status" value="1"/>
</dbReference>
<dbReference type="SUPFAM" id="SSF55031">
    <property type="entry name" value="Bacterial exopeptidase dimerisation domain"/>
    <property type="match status" value="1"/>
</dbReference>
<dbReference type="SUPFAM" id="SSF53187">
    <property type="entry name" value="Zn-dependent exopeptidases"/>
    <property type="match status" value="1"/>
</dbReference>
<dbReference type="PROSITE" id="PS00758">
    <property type="entry name" value="ARGE_DAPE_CPG2_1"/>
    <property type="match status" value="1"/>
</dbReference>
<dbReference type="PROSITE" id="PS00759">
    <property type="entry name" value="ARGE_DAPE_CPG2_2"/>
    <property type="match status" value="1"/>
</dbReference>
<reference key="1">
    <citation type="journal article" date="2008" name="Genome Res.">
        <title>Comparative genome analysis of Salmonella enteritidis PT4 and Salmonella gallinarum 287/91 provides insights into evolutionary and host adaptation pathways.</title>
        <authorList>
            <person name="Thomson N.R."/>
            <person name="Clayton D.J."/>
            <person name="Windhorst D."/>
            <person name="Vernikos G."/>
            <person name="Davidson S."/>
            <person name="Churcher C."/>
            <person name="Quail M.A."/>
            <person name="Stevens M."/>
            <person name="Jones M.A."/>
            <person name="Watson M."/>
            <person name="Barron A."/>
            <person name="Layton A."/>
            <person name="Pickard D."/>
            <person name="Kingsley R.A."/>
            <person name="Bignell A."/>
            <person name="Clark L."/>
            <person name="Harris B."/>
            <person name="Ormond D."/>
            <person name="Abdellah Z."/>
            <person name="Brooks K."/>
            <person name="Cherevach I."/>
            <person name="Chillingworth T."/>
            <person name="Woodward J."/>
            <person name="Norberczak H."/>
            <person name="Lord A."/>
            <person name="Arrowsmith C."/>
            <person name="Jagels K."/>
            <person name="Moule S."/>
            <person name="Mungall K."/>
            <person name="Saunders M."/>
            <person name="Whitehead S."/>
            <person name="Chabalgoity J.A."/>
            <person name="Maskell D."/>
            <person name="Humphreys T."/>
            <person name="Roberts M."/>
            <person name="Barrow P.A."/>
            <person name="Dougan G."/>
            <person name="Parkhill J."/>
        </authorList>
    </citation>
    <scope>NUCLEOTIDE SEQUENCE [LARGE SCALE GENOMIC DNA]</scope>
    <source>
        <strain>287/91 / NCTC 13346</strain>
    </source>
</reference>
<gene>
    <name evidence="1" type="primary">dapE</name>
    <name type="ordered locus">SG2513</name>
</gene>
<feature type="chain" id="PRO_0000375715" description="Succinyl-diaminopimelate desuccinylase">
    <location>
        <begin position="1"/>
        <end position="375"/>
    </location>
</feature>
<feature type="active site" evidence="1">
    <location>
        <position position="68"/>
    </location>
</feature>
<feature type="active site" description="Proton acceptor" evidence="1">
    <location>
        <position position="133"/>
    </location>
</feature>
<feature type="binding site" evidence="1">
    <location>
        <position position="66"/>
    </location>
    <ligand>
        <name>Zn(2+)</name>
        <dbReference type="ChEBI" id="CHEBI:29105"/>
        <label>1</label>
    </ligand>
</feature>
<feature type="binding site" evidence="1">
    <location>
        <position position="99"/>
    </location>
    <ligand>
        <name>Zn(2+)</name>
        <dbReference type="ChEBI" id="CHEBI:29105"/>
        <label>1</label>
    </ligand>
</feature>
<feature type="binding site" evidence="1">
    <location>
        <position position="99"/>
    </location>
    <ligand>
        <name>Zn(2+)</name>
        <dbReference type="ChEBI" id="CHEBI:29105"/>
        <label>2</label>
    </ligand>
</feature>
<feature type="binding site" evidence="1">
    <location>
        <position position="134"/>
    </location>
    <ligand>
        <name>Zn(2+)</name>
        <dbReference type="ChEBI" id="CHEBI:29105"/>
        <label>2</label>
    </ligand>
</feature>
<feature type="binding site" evidence="1">
    <location>
        <position position="162"/>
    </location>
    <ligand>
        <name>Zn(2+)</name>
        <dbReference type="ChEBI" id="CHEBI:29105"/>
        <label>1</label>
    </ligand>
</feature>
<feature type="binding site" evidence="1">
    <location>
        <position position="348"/>
    </location>
    <ligand>
        <name>Zn(2+)</name>
        <dbReference type="ChEBI" id="CHEBI:29105"/>
        <label>2</label>
    </ligand>
</feature>
<name>DAPE_SALG2</name>
<evidence type="ECO:0000255" key="1">
    <source>
        <dbReference type="HAMAP-Rule" id="MF_01690"/>
    </source>
</evidence>
<proteinExistence type="inferred from homology"/>
<accession>B5RCV3</accession>
<comment type="function">
    <text evidence="1">Catalyzes the hydrolysis of N-succinyl-L,L-diaminopimelic acid (SDAP), forming succinate and LL-2,6-diaminopimelate (DAP), an intermediate involved in the bacterial biosynthesis of lysine and meso-diaminopimelic acid, an essential component of bacterial cell walls.</text>
</comment>
<comment type="catalytic activity">
    <reaction evidence="1">
        <text>N-succinyl-(2S,6S)-2,6-diaminopimelate + H2O = (2S,6S)-2,6-diaminopimelate + succinate</text>
        <dbReference type="Rhea" id="RHEA:22608"/>
        <dbReference type="ChEBI" id="CHEBI:15377"/>
        <dbReference type="ChEBI" id="CHEBI:30031"/>
        <dbReference type="ChEBI" id="CHEBI:57609"/>
        <dbReference type="ChEBI" id="CHEBI:58087"/>
        <dbReference type="EC" id="3.5.1.18"/>
    </reaction>
</comment>
<comment type="cofactor">
    <cofactor evidence="1">
        <name>Zn(2+)</name>
        <dbReference type="ChEBI" id="CHEBI:29105"/>
    </cofactor>
    <cofactor evidence="1">
        <name>Co(2+)</name>
        <dbReference type="ChEBI" id="CHEBI:48828"/>
    </cofactor>
    <text evidence="1">Binds 2 Zn(2+) or Co(2+) ions per subunit.</text>
</comment>
<comment type="pathway">
    <text evidence="1">Amino-acid biosynthesis; L-lysine biosynthesis via DAP pathway; LL-2,6-diaminopimelate from (S)-tetrahydrodipicolinate (succinylase route): step 3/3.</text>
</comment>
<comment type="subunit">
    <text evidence="1">Homodimer.</text>
</comment>
<comment type="similarity">
    <text evidence="1">Belongs to the peptidase M20A family. DapE subfamily.</text>
</comment>
<organism>
    <name type="scientific">Salmonella gallinarum (strain 287/91 / NCTC 13346)</name>
    <dbReference type="NCBI Taxonomy" id="550538"/>
    <lineage>
        <taxon>Bacteria</taxon>
        <taxon>Pseudomonadati</taxon>
        <taxon>Pseudomonadota</taxon>
        <taxon>Gammaproteobacteria</taxon>
        <taxon>Enterobacterales</taxon>
        <taxon>Enterobacteriaceae</taxon>
        <taxon>Salmonella</taxon>
    </lineage>
</organism>
<sequence>MSCPVIELTQQLIRRPSLSPDDAGCQALMIERLRKIGFTIEHMDFGDTQNFWAWRGRGETLAFAGHTDVVPAGDVDRWINPPFEPTIRDGMLFGRGAADMKGSLAAMVVAAERFVAQHPHHRGRLAFLITSDEEASAKNGTVKVVEALMARNERLDYCLVGEPSSTEIVGDVVKNGRRGSLTCNLTIHGVQGHVAYPHLADNPVHRAAPFLNELVAIEWDRGNDFFPATSMQVANIQAGTGSNNVIPGELFVQFNFRFSTELTDEMIKERVHALLEKHQLRYTVDWWLSGQPFLTARGKLVDAVVNAIEHYNEIKPQLLTTGGTSDGRFIARMGAQVVELGPVNATIHKINECVNAADLQLLARMYQRIMEQLVA</sequence>
<keyword id="KW-0028">Amino-acid biosynthesis</keyword>
<keyword id="KW-0170">Cobalt</keyword>
<keyword id="KW-0220">Diaminopimelate biosynthesis</keyword>
<keyword id="KW-0378">Hydrolase</keyword>
<keyword id="KW-0457">Lysine biosynthesis</keyword>
<keyword id="KW-0479">Metal-binding</keyword>
<keyword id="KW-0862">Zinc</keyword>